<name>SOV1_YEAST</name>
<evidence type="ECO:0000269" key="1">
    <source>
    </source>
</evidence>
<evidence type="ECO:0000269" key="2">
    <source>
    </source>
</evidence>
<evidence type="ECO:0000269" key="3">
    <source>
    </source>
</evidence>
<evidence type="ECO:0000305" key="4"/>
<accession>Q04748</accession>
<accession>D6VZP0</accession>
<protein>
    <recommendedName>
        <fullName>Protein SOV1, mitochondrial</fullName>
    </recommendedName>
</protein>
<sequence length="898" mass="104748">MFKYNRSLCSSALIAKSQIRFYRLKRAPLNYASHIPEVLNKTIIGPDEPEKCLILKGKTSEEIENNLLSNKKFQEINPLDTIQETFIQYLKFCNETNFKRSNKNLNRLKKTLESKDSNSTVKINAVFNYLLEECDLEIKRLNTTGQTQVYNEEKGNEDDLEQSIMNDIFRSAQEQFEDQEGHIPLRSTSFLLEILKSFNERFNGIIKPKESITEMVTFSQLAQAFEVVKLIPVQEMKEKGIYLVGNLLYGTGKVRLDPINESFYIESLLVFGNYKAAYSLFITNKDKVNERWWNELGLMITLRSNHLRNFRKLLAETDAKYSTKYSYLSPRVTKLSIRKYLSIGNVTEANILTDRFIKLVEEVGIIRMKDEQEELPTGVKNFQNEKHATEFLNELEIPSDHDYISIVDFHLYKRNIPMAAQLISKYMEIPGTTQEDAAFLLVKTKLNMLKDFEKLRNIFAQNKDYVVPENNVKMLQEAFESVITKYNTNSPIYNELLFENVSALTKSIVLTDFLEEFITKQASGQWMELNSVSRSRKFNGLLNILLGTGEEEKAYNILKKLEEASKKSKTDPDLLYNQFYSEVNAYHYAKFVEFYSLQIQNMKAQNTPSFRKKEFKQKVKSLLKRMQESEVIPNAVFLREILNFYDSMYDFNSSFEIINPLLESKQQVSSESSLSTSNPCRFYNRRIITKPLYHKIWSVYCHYYHVLQNNSRILSKKSSIVKKLIKRQIKIHPTCHPRVLFQMTAENGEILPDKTFSKLIVSTFMKSGDLEAIPAILTFLTKKFDLNIDYDLSMYILKGLKRQYLRDISNISKDACEYKLRKAELMNNESILKNIPQGTNQENTISHLIREILIFIKWKEKSDCSTFLMVEDAFKELGTEFTLLEELIEDVNKLKIKA</sequence>
<comment type="subcellular location">
    <subcellularLocation>
        <location evidence="1 3">Mitochondrion</location>
    </subcellularLocation>
</comment>
<comment type="miscellaneous">
    <text evidence="2">Present with 396 molecules/cell in log phase SD medium.</text>
</comment>
<feature type="transit peptide" description="Mitochondrion" evidence="4">
    <location>
        <begin position="1"/>
        <end position="31"/>
    </location>
</feature>
<feature type="chain" id="PRO_0000203280" description="Protein SOV1, mitochondrial">
    <location>
        <begin position="32"/>
        <end position="898"/>
    </location>
</feature>
<reference key="1">
    <citation type="journal article" date="1997" name="Nature">
        <title>The nucleotide sequence of Saccharomyces cerevisiae chromosome XIII.</title>
        <authorList>
            <person name="Bowman S."/>
            <person name="Churcher C.M."/>
            <person name="Badcock K."/>
            <person name="Brown D."/>
            <person name="Chillingworth T."/>
            <person name="Connor R."/>
            <person name="Dedman K."/>
            <person name="Devlin K."/>
            <person name="Gentles S."/>
            <person name="Hamlin N."/>
            <person name="Hunt S."/>
            <person name="Jagels K."/>
            <person name="Lye G."/>
            <person name="Moule S."/>
            <person name="Odell C."/>
            <person name="Pearson D."/>
            <person name="Rajandream M.A."/>
            <person name="Rice P."/>
            <person name="Skelton J."/>
            <person name="Walsh S.V."/>
            <person name="Whitehead S."/>
            <person name="Barrell B.G."/>
        </authorList>
    </citation>
    <scope>NUCLEOTIDE SEQUENCE [LARGE SCALE GENOMIC DNA]</scope>
    <source>
        <strain>ATCC 204508 / S288c</strain>
    </source>
</reference>
<reference key="2">
    <citation type="journal article" date="2014" name="G3 (Bethesda)">
        <title>The reference genome sequence of Saccharomyces cerevisiae: Then and now.</title>
        <authorList>
            <person name="Engel S.R."/>
            <person name="Dietrich F.S."/>
            <person name="Fisk D.G."/>
            <person name="Binkley G."/>
            <person name="Balakrishnan R."/>
            <person name="Costanzo M.C."/>
            <person name="Dwight S.S."/>
            <person name="Hitz B.C."/>
            <person name="Karra K."/>
            <person name="Nash R.S."/>
            <person name="Weng S."/>
            <person name="Wong E.D."/>
            <person name="Lloyd P."/>
            <person name="Skrzypek M.S."/>
            <person name="Miyasato S.R."/>
            <person name="Simison M."/>
            <person name="Cherry J.M."/>
        </authorList>
    </citation>
    <scope>GENOME REANNOTATION</scope>
    <source>
        <strain>ATCC 204508 / S288c</strain>
    </source>
</reference>
<reference key="3">
    <citation type="journal article" date="2003" name="Nature">
        <title>Global analysis of protein localization in budding yeast.</title>
        <authorList>
            <person name="Huh W.-K."/>
            <person name="Falvo J.V."/>
            <person name="Gerke L.C."/>
            <person name="Carroll A.S."/>
            <person name="Howson R.W."/>
            <person name="Weissman J.S."/>
            <person name="O'Shea E.K."/>
        </authorList>
    </citation>
    <scope>SUBCELLULAR LOCATION [LARGE SCALE ANALYSIS]</scope>
</reference>
<reference key="4">
    <citation type="journal article" date="2003" name="Nature">
        <title>Global analysis of protein expression in yeast.</title>
        <authorList>
            <person name="Ghaemmaghami S."/>
            <person name="Huh W.-K."/>
            <person name="Bower K."/>
            <person name="Howson R.W."/>
            <person name="Belle A."/>
            <person name="Dephoure N."/>
            <person name="O'Shea E.K."/>
            <person name="Weissman J.S."/>
        </authorList>
    </citation>
    <scope>LEVEL OF PROTEIN EXPRESSION [LARGE SCALE ANALYSIS]</scope>
</reference>
<reference key="5">
    <citation type="journal article" date="2003" name="Proc. Natl. Acad. Sci. U.S.A.">
        <title>The proteome of Saccharomyces cerevisiae mitochondria.</title>
        <authorList>
            <person name="Sickmann A."/>
            <person name="Reinders J."/>
            <person name="Wagner Y."/>
            <person name="Joppich C."/>
            <person name="Zahedi R.P."/>
            <person name="Meyer H.E."/>
            <person name="Schoenfisch B."/>
            <person name="Perschil I."/>
            <person name="Chacinska A."/>
            <person name="Guiard B."/>
            <person name="Rehling P."/>
            <person name="Pfanner N."/>
            <person name="Meisinger C."/>
        </authorList>
    </citation>
    <scope>SUBCELLULAR LOCATION [LARGE SCALE ANALYSIS]</scope>
    <source>
        <strain>ATCC 76625 / YPH499</strain>
    </source>
</reference>
<keyword id="KW-0496">Mitochondrion</keyword>
<keyword id="KW-1185">Reference proteome</keyword>
<keyword id="KW-0809">Transit peptide</keyword>
<dbReference type="EMBL" id="Z48952">
    <property type="protein sequence ID" value="CAA88791.1"/>
    <property type="molecule type" value="Genomic_DNA"/>
</dbReference>
<dbReference type="EMBL" id="BK006946">
    <property type="protein sequence ID" value="DAA09964.1"/>
    <property type="molecule type" value="Genomic_DNA"/>
</dbReference>
<dbReference type="PIR" id="S52826">
    <property type="entry name" value="S52826"/>
</dbReference>
<dbReference type="RefSeq" id="NP_013782.1">
    <property type="nucleotide sequence ID" value="NM_001182564.1"/>
</dbReference>
<dbReference type="BioGRID" id="35241">
    <property type="interactions" value="115"/>
</dbReference>
<dbReference type="DIP" id="DIP-2567N"/>
<dbReference type="FunCoup" id="Q04748">
    <property type="interactions" value="333"/>
</dbReference>
<dbReference type="IntAct" id="Q04748">
    <property type="interactions" value="29"/>
</dbReference>
<dbReference type="MINT" id="Q04748"/>
<dbReference type="STRING" id="4932.YMR066W"/>
<dbReference type="PaxDb" id="4932-YMR066W"/>
<dbReference type="PeptideAtlas" id="Q04748"/>
<dbReference type="EnsemblFungi" id="YMR066W_mRNA">
    <property type="protein sequence ID" value="YMR066W"/>
    <property type="gene ID" value="YMR066W"/>
</dbReference>
<dbReference type="GeneID" id="855088"/>
<dbReference type="KEGG" id="sce:YMR066W"/>
<dbReference type="AGR" id="SGD:S000004670"/>
<dbReference type="SGD" id="S000004670">
    <property type="gene designation" value="SOV1"/>
</dbReference>
<dbReference type="VEuPathDB" id="FungiDB:YMR066W"/>
<dbReference type="eggNOG" id="ENOG502QQPQ">
    <property type="taxonomic scope" value="Eukaryota"/>
</dbReference>
<dbReference type="HOGENOM" id="CLU_327620_0_0_1"/>
<dbReference type="InParanoid" id="Q04748"/>
<dbReference type="OMA" id="VRMDPIN"/>
<dbReference type="OrthoDB" id="185373at2759"/>
<dbReference type="BioCyc" id="YEAST:G3O-32768-MONOMER"/>
<dbReference type="BioGRID-ORCS" id="855088">
    <property type="hits" value="0 hits in 10 CRISPR screens"/>
</dbReference>
<dbReference type="PRO" id="PR:Q04748"/>
<dbReference type="Proteomes" id="UP000002311">
    <property type="component" value="Chromosome XIII"/>
</dbReference>
<dbReference type="RNAct" id="Q04748">
    <property type="molecule type" value="protein"/>
</dbReference>
<dbReference type="GO" id="GO:0005739">
    <property type="term" value="C:mitochondrion"/>
    <property type="evidence" value="ECO:0007005"/>
    <property type="project" value="SGD"/>
</dbReference>
<dbReference type="GO" id="GO:0008494">
    <property type="term" value="F:translation activator activity"/>
    <property type="evidence" value="ECO:0000315"/>
    <property type="project" value="SGD"/>
</dbReference>
<dbReference type="GO" id="GO:0061668">
    <property type="term" value="P:mitochondrial ribosome assembly"/>
    <property type="evidence" value="ECO:0000315"/>
    <property type="project" value="SGD"/>
</dbReference>
<dbReference type="GO" id="GO:0032543">
    <property type="term" value="P:mitochondrial translation"/>
    <property type="evidence" value="ECO:0000315"/>
    <property type="project" value="SGD"/>
</dbReference>
<gene>
    <name type="primary">SOV1</name>
    <name type="ordered locus">YMR066W</name>
    <name type="ORF">YM9916.05</name>
</gene>
<organism>
    <name type="scientific">Saccharomyces cerevisiae (strain ATCC 204508 / S288c)</name>
    <name type="common">Baker's yeast</name>
    <dbReference type="NCBI Taxonomy" id="559292"/>
    <lineage>
        <taxon>Eukaryota</taxon>
        <taxon>Fungi</taxon>
        <taxon>Dikarya</taxon>
        <taxon>Ascomycota</taxon>
        <taxon>Saccharomycotina</taxon>
        <taxon>Saccharomycetes</taxon>
        <taxon>Saccharomycetales</taxon>
        <taxon>Saccharomycetaceae</taxon>
        <taxon>Saccharomyces</taxon>
    </lineage>
</organism>
<proteinExistence type="evidence at protein level"/>